<feature type="chain" id="PRO_0000386169" description="GTPase Obg">
    <location>
        <begin position="1"/>
        <end position="365"/>
    </location>
</feature>
<feature type="domain" description="Obg" evidence="2">
    <location>
        <begin position="1"/>
        <end position="159"/>
    </location>
</feature>
<feature type="domain" description="OBG-type G" evidence="1">
    <location>
        <begin position="160"/>
        <end position="334"/>
    </location>
</feature>
<feature type="binding site" evidence="1">
    <location>
        <begin position="166"/>
        <end position="173"/>
    </location>
    <ligand>
        <name>GTP</name>
        <dbReference type="ChEBI" id="CHEBI:37565"/>
    </ligand>
</feature>
<feature type="binding site" evidence="1">
    <location>
        <position position="173"/>
    </location>
    <ligand>
        <name>Mg(2+)</name>
        <dbReference type="ChEBI" id="CHEBI:18420"/>
    </ligand>
</feature>
<feature type="binding site" evidence="1">
    <location>
        <begin position="191"/>
        <end position="195"/>
    </location>
    <ligand>
        <name>GTP</name>
        <dbReference type="ChEBI" id="CHEBI:37565"/>
    </ligand>
</feature>
<feature type="binding site" evidence="1">
    <location>
        <position position="193"/>
    </location>
    <ligand>
        <name>Mg(2+)</name>
        <dbReference type="ChEBI" id="CHEBI:18420"/>
    </ligand>
</feature>
<feature type="binding site" evidence="1">
    <location>
        <begin position="213"/>
        <end position="216"/>
    </location>
    <ligand>
        <name>GTP</name>
        <dbReference type="ChEBI" id="CHEBI:37565"/>
    </ligand>
</feature>
<feature type="binding site" evidence="1">
    <location>
        <begin position="284"/>
        <end position="287"/>
    </location>
    <ligand>
        <name>GTP</name>
        <dbReference type="ChEBI" id="CHEBI:37565"/>
    </ligand>
</feature>
<feature type="binding site" evidence="1">
    <location>
        <begin position="315"/>
        <end position="317"/>
    </location>
    <ligand>
        <name>GTP</name>
        <dbReference type="ChEBI" id="CHEBI:37565"/>
    </ligand>
</feature>
<organism>
    <name type="scientific">Cupriavidus necator (strain ATCC 17699 / DSM 428 / KCTC 22496 / NCIMB 10442 / H16 / Stanier 337)</name>
    <name type="common">Ralstonia eutropha</name>
    <dbReference type="NCBI Taxonomy" id="381666"/>
    <lineage>
        <taxon>Bacteria</taxon>
        <taxon>Pseudomonadati</taxon>
        <taxon>Pseudomonadota</taxon>
        <taxon>Betaproteobacteria</taxon>
        <taxon>Burkholderiales</taxon>
        <taxon>Burkholderiaceae</taxon>
        <taxon>Cupriavidus</taxon>
    </lineage>
</organism>
<name>OBG_CUPNH</name>
<keyword id="KW-0963">Cytoplasm</keyword>
<keyword id="KW-0342">GTP-binding</keyword>
<keyword id="KW-0378">Hydrolase</keyword>
<keyword id="KW-0460">Magnesium</keyword>
<keyword id="KW-0479">Metal-binding</keyword>
<keyword id="KW-0547">Nucleotide-binding</keyword>
<keyword id="KW-1185">Reference proteome</keyword>
<comment type="function">
    <text evidence="1">An essential GTPase which binds GTP, GDP and possibly (p)ppGpp with moderate affinity, with high nucleotide exchange rates and a fairly low GTP hydrolysis rate. Plays a role in control of the cell cycle, stress response, ribosome biogenesis and in those bacteria that undergo differentiation, in morphogenesis control.</text>
</comment>
<comment type="cofactor">
    <cofactor evidence="1">
        <name>Mg(2+)</name>
        <dbReference type="ChEBI" id="CHEBI:18420"/>
    </cofactor>
</comment>
<comment type="subunit">
    <text evidence="1">Monomer.</text>
</comment>
<comment type="subcellular location">
    <subcellularLocation>
        <location evidence="1">Cytoplasm</location>
    </subcellularLocation>
</comment>
<comment type="similarity">
    <text evidence="1">Belongs to the TRAFAC class OBG-HflX-like GTPase superfamily. OBG GTPase family.</text>
</comment>
<accession>Q0K6P6</accession>
<evidence type="ECO:0000255" key="1">
    <source>
        <dbReference type="HAMAP-Rule" id="MF_01454"/>
    </source>
</evidence>
<evidence type="ECO:0000255" key="2">
    <source>
        <dbReference type="PROSITE-ProRule" id="PRU01231"/>
    </source>
</evidence>
<dbReference type="EC" id="3.6.5.-" evidence="1"/>
<dbReference type="EMBL" id="AM260479">
    <property type="protein sequence ID" value="CAJ94325.1"/>
    <property type="molecule type" value="Genomic_DNA"/>
</dbReference>
<dbReference type="SMR" id="Q0K6P6"/>
<dbReference type="STRING" id="381666.H16_A3250"/>
<dbReference type="KEGG" id="reh:H16_A3250"/>
<dbReference type="eggNOG" id="COG0536">
    <property type="taxonomic scope" value="Bacteria"/>
</dbReference>
<dbReference type="HOGENOM" id="CLU_011747_2_0_4"/>
<dbReference type="OrthoDB" id="9807318at2"/>
<dbReference type="Proteomes" id="UP000008210">
    <property type="component" value="Chromosome 1"/>
</dbReference>
<dbReference type="GO" id="GO:0005737">
    <property type="term" value="C:cytoplasm"/>
    <property type="evidence" value="ECO:0007669"/>
    <property type="project" value="UniProtKB-SubCell"/>
</dbReference>
<dbReference type="GO" id="GO:0005525">
    <property type="term" value="F:GTP binding"/>
    <property type="evidence" value="ECO:0007669"/>
    <property type="project" value="UniProtKB-UniRule"/>
</dbReference>
<dbReference type="GO" id="GO:0003924">
    <property type="term" value="F:GTPase activity"/>
    <property type="evidence" value="ECO:0007669"/>
    <property type="project" value="UniProtKB-UniRule"/>
</dbReference>
<dbReference type="GO" id="GO:0000287">
    <property type="term" value="F:magnesium ion binding"/>
    <property type="evidence" value="ECO:0007669"/>
    <property type="project" value="InterPro"/>
</dbReference>
<dbReference type="GO" id="GO:0042254">
    <property type="term" value="P:ribosome biogenesis"/>
    <property type="evidence" value="ECO:0007669"/>
    <property type="project" value="UniProtKB-UniRule"/>
</dbReference>
<dbReference type="CDD" id="cd01898">
    <property type="entry name" value="Obg"/>
    <property type="match status" value="1"/>
</dbReference>
<dbReference type="FunFam" id="2.70.210.12:FF:000001">
    <property type="entry name" value="GTPase Obg"/>
    <property type="match status" value="1"/>
</dbReference>
<dbReference type="Gene3D" id="2.70.210.12">
    <property type="entry name" value="GTP1/OBG domain"/>
    <property type="match status" value="1"/>
</dbReference>
<dbReference type="Gene3D" id="3.40.50.300">
    <property type="entry name" value="P-loop containing nucleotide triphosphate hydrolases"/>
    <property type="match status" value="1"/>
</dbReference>
<dbReference type="HAMAP" id="MF_01454">
    <property type="entry name" value="GTPase_Obg"/>
    <property type="match status" value="1"/>
</dbReference>
<dbReference type="InterPro" id="IPR031167">
    <property type="entry name" value="G_OBG"/>
</dbReference>
<dbReference type="InterPro" id="IPR006073">
    <property type="entry name" value="GTP-bd"/>
</dbReference>
<dbReference type="InterPro" id="IPR014100">
    <property type="entry name" value="GTP-bd_Obg/CgtA"/>
</dbReference>
<dbReference type="InterPro" id="IPR006074">
    <property type="entry name" value="GTP1-OBG_CS"/>
</dbReference>
<dbReference type="InterPro" id="IPR006169">
    <property type="entry name" value="GTP1_OBG_dom"/>
</dbReference>
<dbReference type="InterPro" id="IPR036726">
    <property type="entry name" value="GTP1_OBG_dom_sf"/>
</dbReference>
<dbReference type="InterPro" id="IPR045086">
    <property type="entry name" value="OBG_GTPase"/>
</dbReference>
<dbReference type="InterPro" id="IPR027417">
    <property type="entry name" value="P-loop_NTPase"/>
</dbReference>
<dbReference type="InterPro" id="IPR005225">
    <property type="entry name" value="Small_GTP-bd"/>
</dbReference>
<dbReference type="NCBIfam" id="TIGR02729">
    <property type="entry name" value="Obg_CgtA"/>
    <property type="match status" value="1"/>
</dbReference>
<dbReference type="NCBIfam" id="NF008954">
    <property type="entry name" value="PRK12296.1"/>
    <property type="match status" value="1"/>
</dbReference>
<dbReference type="NCBIfam" id="NF008955">
    <property type="entry name" value="PRK12297.1"/>
    <property type="match status" value="1"/>
</dbReference>
<dbReference type="NCBIfam" id="NF008956">
    <property type="entry name" value="PRK12299.1"/>
    <property type="match status" value="1"/>
</dbReference>
<dbReference type="NCBIfam" id="TIGR00231">
    <property type="entry name" value="small_GTP"/>
    <property type="match status" value="1"/>
</dbReference>
<dbReference type="PANTHER" id="PTHR11702">
    <property type="entry name" value="DEVELOPMENTALLY REGULATED GTP-BINDING PROTEIN-RELATED"/>
    <property type="match status" value="1"/>
</dbReference>
<dbReference type="PANTHER" id="PTHR11702:SF31">
    <property type="entry name" value="MITOCHONDRIAL RIBOSOME-ASSOCIATED GTPASE 2"/>
    <property type="match status" value="1"/>
</dbReference>
<dbReference type="Pfam" id="PF01018">
    <property type="entry name" value="GTP1_OBG"/>
    <property type="match status" value="1"/>
</dbReference>
<dbReference type="Pfam" id="PF01926">
    <property type="entry name" value="MMR_HSR1"/>
    <property type="match status" value="1"/>
</dbReference>
<dbReference type="PIRSF" id="PIRSF002401">
    <property type="entry name" value="GTP_bd_Obg/CgtA"/>
    <property type="match status" value="1"/>
</dbReference>
<dbReference type="PRINTS" id="PR00326">
    <property type="entry name" value="GTP1OBG"/>
</dbReference>
<dbReference type="SUPFAM" id="SSF82051">
    <property type="entry name" value="Obg GTP-binding protein N-terminal domain"/>
    <property type="match status" value="1"/>
</dbReference>
<dbReference type="SUPFAM" id="SSF52540">
    <property type="entry name" value="P-loop containing nucleoside triphosphate hydrolases"/>
    <property type="match status" value="1"/>
</dbReference>
<dbReference type="PROSITE" id="PS51710">
    <property type="entry name" value="G_OBG"/>
    <property type="match status" value="1"/>
</dbReference>
<dbReference type="PROSITE" id="PS00905">
    <property type="entry name" value="GTP1_OBG"/>
    <property type="match status" value="1"/>
</dbReference>
<dbReference type="PROSITE" id="PS51883">
    <property type="entry name" value="OBG"/>
    <property type="match status" value="1"/>
</dbReference>
<proteinExistence type="inferred from homology"/>
<reference key="1">
    <citation type="journal article" date="2006" name="Nat. Biotechnol.">
        <title>Genome sequence of the bioplastic-producing 'Knallgas' bacterium Ralstonia eutropha H16.</title>
        <authorList>
            <person name="Pohlmann A."/>
            <person name="Fricke W.F."/>
            <person name="Reinecke F."/>
            <person name="Kusian B."/>
            <person name="Liesegang H."/>
            <person name="Cramm R."/>
            <person name="Eitinger T."/>
            <person name="Ewering C."/>
            <person name="Poetter M."/>
            <person name="Schwartz E."/>
            <person name="Strittmatter A."/>
            <person name="Voss I."/>
            <person name="Gottschalk G."/>
            <person name="Steinbuechel A."/>
            <person name="Friedrich B."/>
            <person name="Bowien B."/>
        </authorList>
    </citation>
    <scope>NUCLEOTIDE SEQUENCE [LARGE SCALE GENOMIC DNA]</scope>
    <source>
        <strain>ATCC 17699 / DSM 428 / KCTC 22496 / NCIMB 10442 / H16 / Stanier 337</strain>
    </source>
</reference>
<protein>
    <recommendedName>
        <fullName evidence="1">GTPase Obg</fullName>
        <ecNumber evidence="1">3.6.5.-</ecNumber>
    </recommendedName>
    <alternativeName>
        <fullName evidence="1">GTP-binding protein Obg</fullName>
    </alternativeName>
</protein>
<gene>
    <name evidence="1" type="primary">obg</name>
    <name type="ordered locus">H16_A3250</name>
</gene>
<sequence>MKFIDEARIEAIAGNGGNGSASFRREKFVPFGGPDGGDGGRGGSVFAVADRNINTLIDFRYARKHVARNGENGRGSDCYGAAGEDITLRMPVGTLITDMDTGEVIADLTEHGQRVCLAEGGMGGWGNLHFKSSTNRAPRQQVDGKPGERRMLKLELKVLADVGLLGMPNAGKSTFISHISNARPKVADYPFTTLHPNLGVVRVDHEQSFVVADIPGLIEGAAEGAGLGHQFLRHLQRTGLLLHIVDLAPFDEAVDPVAEAKAIVNELKKYDETLYDKPRWLVLNKLDVVPEDERAARVKDFIKRYKWKGPVFQISALTGEGCRELIYAIKDHLQAIKAEEAAALAEPDIRLDERLHNVDQGQGEA</sequence>